<dbReference type="EMBL" id="M19377">
    <property type="protein sequence ID" value="AAA88386.1"/>
    <property type="molecule type" value="Genomic_DNA"/>
</dbReference>
<dbReference type="EMBL" id="M11912">
    <property type="protein sequence ID" value="AAA88377.1"/>
    <property type="molecule type" value="Genomic_DNA"/>
</dbReference>
<dbReference type="PIR" id="A04237">
    <property type="entry name" value="Z5BP83"/>
</dbReference>
<dbReference type="RefSeq" id="NP_040651.1">
    <property type="nucleotide sequence ID" value="NC_001418.1"/>
</dbReference>
<dbReference type="RefSeq" id="YP_010774588.1">
    <property type="nucleotide sequence ID" value="NC_074763.1"/>
</dbReference>
<dbReference type="GeneID" id="1260905"/>
<dbReference type="GeneID" id="80510898"/>
<dbReference type="KEGG" id="vg:1260905"/>
<dbReference type="Proteomes" id="UP000001719">
    <property type="component" value="Genome"/>
</dbReference>
<dbReference type="Proteomes" id="UP000009090">
    <property type="component" value="Genome"/>
</dbReference>
<organism>
    <name type="scientific">Pseudomonas phage Pf3</name>
    <name type="common">Bacteriophage Pf3</name>
    <dbReference type="NCBI Taxonomy" id="10872"/>
    <lineage>
        <taxon>Viruses</taxon>
        <taxon>Monodnaviria</taxon>
        <taxon>Loebvirae</taxon>
        <taxon>Hofneiviricota</taxon>
        <taxon>Faserviricetes</taxon>
        <taxon>Tubulavirales</taxon>
        <taxon>Inoviridae</taxon>
        <taxon>Tertilicivirus</taxon>
        <taxon>Tertilicivirus Pf3</taxon>
    </lineage>
</organism>
<sequence>MSYYVCVQLVNDVCHEWAERSDLLSLPEGSGLQIGGMLLLLSATAWGIQQIARLLLNR</sequence>
<feature type="chain" id="PRO_0000098212" description="6.4 kDa protein">
    <location>
        <begin position="1"/>
        <end position="58"/>
    </location>
</feature>
<organismHost>
    <name type="scientific">Pseudomonas aeruginosa</name>
    <dbReference type="NCBI Taxonomy" id="287"/>
</organismHost>
<name>VG058_BPPF3</name>
<accession>P03629</accession>
<protein>
    <recommendedName>
        <fullName>6.4 kDa protein</fullName>
    </recommendedName>
    <alternativeName>
        <fullName>ORF 58</fullName>
    </alternativeName>
</protein>
<proteinExistence type="predicted"/>
<keyword id="KW-1185">Reference proteome</keyword>
<reference key="1">
    <citation type="journal article" date="1985" name="J. Virol.">
        <title>Nucleotide sequence of the genome of Pf3, an IncP-1 plasmid-specific filamentous bacteriophage of Pseudomonas aeruginosa.</title>
        <authorList>
            <person name="Luiten R.G.M."/>
            <person name="Putterman D.G."/>
            <person name="Schoenmakers J.G.G."/>
            <person name="Konings R.N.H."/>
            <person name="Day L.A."/>
        </authorList>
    </citation>
    <scope>NUCLEOTIDE SEQUENCE [GENOMIC DNA]</scope>
    <source>
        <strain>New York</strain>
        <strain>Nijmegen</strain>
    </source>
</reference>